<evidence type="ECO:0000255" key="1">
    <source>
        <dbReference type="HAMAP-Rule" id="MF_00291"/>
    </source>
</evidence>
<evidence type="ECO:0000305" key="2"/>
<feature type="chain" id="PRO_1000115042" description="Small ribosomal subunit protein uS2">
    <location>
        <begin position="1"/>
        <end position="238"/>
    </location>
</feature>
<keyword id="KW-1185">Reference proteome</keyword>
<keyword id="KW-0687">Ribonucleoprotein</keyword>
<keyword id="KW-0689">Ribosomal protein</keyword>
<accession>A9BAS9</accession>
<name>RS2_PROM4</name>
<organism>
    <name type="scientific">Prochlorococcus marinus (strain MIT 9211)</name>
    <dbReference type="NCBI Taxonomy" id="93059"/>
    <lineage>
        <taxon>Bacteria</taxon>
        <taxon>Bacillati</taxon>
        <taxon>Cyanobacteriota</taxon>
        <taxon>Cyanophyceae</taxon>
        <taxon>Synechococcales</taxon>
        <taxon>Prochlorococcaceae</taxon>
        <taxon>Prochlorococcus</taxon>
    </lineage>
</organism>
<sequence length="238" mass="26819">MAVVTLSEMMEAGAHFGHQTRRWNPKMSRYIYCARNGVHIIDLVKTAVCMNSAYKWTRNAAKSGKRFLFVGTKKQASEVVALEANRCGASYVNQRWLGGMLTNWTTMKARIDRLKDLERMESSGAIAMRPKKEASVLRHELERLQKYLGGLKGMKRLPDVVVLVDQRRETNAVLEARKLDIPLVSMLDTNCDPDLCEVPIPCNDDAVRSVQLILGRLADAINEGRHGSNEHRGGQRLK</sequence>
<reference key="1">
    <citation type="journal article" date="2007" name="PLoS Genet.">
        <title>Patterns and implications of gene gain and loss in the evolution of Prochlorococcus.</title>
        <authorList>
            <person name="Kettler G.C."/>
            <person name="Martiny A.C."/>
            <person name="Huang K."/>
            <person name="Zucker J."/>
            <person name="Coleman M.L."/>
            <person name="Rodrigue S."/>
            <person name="Chen F."/>
            <person name="Lapidus A."/>
            <person name="Ferriera S."/>
            <person name="Johnson J."/>
            <person name="Steglich C."/>
            <person name="Church G.M."/>
            <person name="Richardson P."/>
            <person name="Chisholm S.W."/>
        </authorList>
    </citation>
    <scope>NUCLEOTIDE SEQUENCE [LARGE SCALE GENOMIC DNA]</scope>
    <source>
        <strain>MIT 9211</strain>
    </source>
</reference>
<gene>
    <name evidence="1" type="primary">rpsB</name>
    <name evidence="1" type="synonym">rps2</name>
    <name type="ordered locus">P9211_10101</name>
</gene>
<comment type="similarity">
    <text evidence="1">Belongs to the universal ribosomal protein uS2 family.</text>
</comment>
<protein>
    <recommendedName>
        <fullName evidence="1">Small ribosomal subunit protein uS2</fullName>
    </recommendedName>
    <alternativeName>
        <fullName evidence="2">30S ribosomal protein S2</fullName>
    </alternativeName>
</protein>
<proteinExistence type="inferred from homology"/>
<dbReference type="EMBL" id="CP000878">
    <property type="protein sequence ID" value="ABX08941.1"/>
    <property type="molecule type" value="Genomic_DNA"/>
</dbReference>
<dbReference type="RefSeq" id="WP_012195562.1">
    <property type="nucleotide sequence ID" value="NC_009976.1"/>
</dbReference>
<dbReference type="SMR" id="A9BAS9"/>
<dbReference type="STRING" id="93059.P9211_10101"/>
<dbReference type="KEGG" id="pmj:P9211_10101"/>
<dbReference type="eggNOG" id="COG0052">
    <property type="taxonomic scope" value="Bacteria"/>
</dbReference>
<dbReference type="HOGENOM" id="CLU_040318_1_2_3"/>
<dbReference type="OrthoDB" id="9808036at2"/>
<dbReference type="Proteomes" id="UP000000788">
    <property type="component" value="Chromosome"/>
</dbReference>
<dbReference type="GO" id="GO:0022627">
    <property type="term" value="C:cytosolic small ribosomal subunit"/>
    <property type="evidence" value="ECO:0007669"/>
    <property type="project" value="TreeGrafter"/>
</dbReference>
<dbReference type="GO" id="GO:0003735">
    <property type="term" value="F:structural constituent of ribosome"/>
    <property type="evidence" value="ECO:0007669"/>
    <property type="project" value="InterPro"/>
</dbReference>
<dbReference type="GO" id="GO:0006412">
    <property type="term" value="P:translation"/>
    <property type="evidence" value="ECO:0007669"/>
    <property type="project" value="UniProtKB-UniRule"/>
</dbReference>
<dbReference type="CDD" id="cd01425">
    <property type="entry name" value="RPS2"/>
    <property type="match status" value="1"/>
</dbReference>
<dbReference type="FunFam" id="1.10.287.610:FF:000001">
    <property type="entry name" value="30S ribosomal protein S2"/>
    <property type="match status" value="1"/>
</dbReference>
<dbReference type="Gene3D" id="3.40.50.10490">
    <property type="entry name" value="Glucose-6-phosphate isomerase like protein, domain 1"/>
    <property type="match status" value="1"/>
</dbReference>
<dbReference type="Gene3D" id="1.10.287.610">
    <property type="entry name" value="Helix hairpin bin"/>
    <property type="match status" value="1"/>
</dbReference>
<dbReference type="HAMAP" id="MF_00291_B">
    <property type="entry name" value="Ribosomal_uS2_B"/>
    <property type="match status" value="1"/>
</dbReference>
<dbReference type="InterPro" id="IPR001865">
    <property type="entry name" value="Ribosomal_uS2"/>
</dbReference>
<dbReference type="InterPro" id="IPR005706">
    <property type="entry name" value="Ribosomal_uS2_bac/mit/plastid"/>
</dbReference>
<dbReference type="InterPro" id="IPR018130">
    <property type="entry name" value="Ribosomal_uS2_CS"/>
</dbReference>
<dbReference type="InterPro" id="IPR023591">
    <property type="entry name" value="Ribosomal_uS2_flav_dom_sf"/>
</dbReference>
<dbReference type="NCBIfam" id="TIGR01011">
    <property type="entry name" value="rpsB_bact"/>
    <property type="match status" value="1"/>
</dbReference>
<dbReference type="PANTHER" id="PTHR12534">
    <property type="entry name" value="30S RIBOSOMAL PROTEIN S2 PROKARYOTIC AND ORGANELLAR"/>
    <property type="match status" value="1"/>
</dbReference>
<dbReference type="PANTHER" id="PTHR12534:SF0">
    <property type="entry name" value="SMALL RIBOSOMAL SUBUNIT PROTEIN US2M"/>
    <property type="match status" value="1"/>
</dbReference>
<dbReference type="Pfam" id="PF00318">
    <property type="entry name" value="Ribosomal_S2"/>
    <property type="match status" value="1"/>
</dbReference>
<dbReference type="PRINTS" id="PR00395">
    <property type="entry name" value="RIBOSOMALS2"/>
</dbReference>
<dbReference type="SUPFAM" id="SSF52313">
    <property type="entry name" value="Ribosomal protein S2"/>
    <property type="match status" value="1"/>
</dbReference>
<dbReference type="PROSITE" id="PS00962">
    <property type="entry name" value="RIBOSOMAL_S2_1"/>
    <property type="match status" value="1"/>
</dbReference>